<name>CAPSD_SFAVA</name>
<comment type="function">
    <text evidence="1">Major protein of the capsid.</text>
</comment>
<comment type="subcellular location">
    <subcellularLocation>
        <location evidence="1">Virion</location>
    </subcellularLocation>
</comment>
<comment type="sequence caution" evidence="3">
    <conflict type="frameshift">
        <sequence resource="EMBL-CDS" id="AAL16645"/>
    </conflict>
</comment>
<protein>
    <recommendedName>
        <fullName>Major capsid protein</fullName>
    </recommendedName>
</protein>
<evidence type="ECO:0000250" key="1"/>
<evidence type="ECO:0000256" key="2">
    <source>
        <dbReference type="SAM" id="MobiDB-lite"/>
    </source>
</evidence>
<evidence type="ECO:0000305" key="3"/>
<proteinExistence type="inferred from homology"/>
<sequence>MSTPTISADTTAQNATSTEVREDVNKRGNIDNYIYGPDERVTTYFVREIRPCAAFSKLPVLLTNGNGMKKFGGTFTMPINASGDYLLSLTAYATLSAGTITGAGDASVVSWLPKLGHKLIKSVKLKIDGKPLVELSSSFMDMWSEFMIDSGNYEAYNNMVGGEYEFNKDRINNKSVVLPIPMYFSRDTGIALPIGAMVNNRVTVEFVFRKVTDLLVLENKPATGAGTGVVRTLTEADFSVVPTIASFEVVADFAVVTDFEIDRTSCTPHYMYMEKPVDVPATELVKPTDGTTAPDTMSFEIEHTNGIVKALFFGVRNITRPEYLDFYKVGLPRFNLGAREDVGTATVSRIGIKCNDKYRVPLLPSEHFVYTEPYHAAKRVPTTNNGLYMYSFALDLHTIDPKGSINPSNFNSNISVVLRPSETLNAATTERFEFNATVLTGYILYVENGNLRKIDNGGDFN</sequence>
<reference key="1">
    <citation type="journal article" date="2003" name="J. Gen. Virol.">
        <title>Evidence for the evolution of ascoviruses from iridoviruses.</title>
        <authorList>
            <person name="Stasiak K."/>
            <person name="Renault S."/>
            <person name="Demattei M.V."/>
            <person name="Bigot Y."/>
            <person name="Federici B.A."/>
        </authorList>
    </citation>
    <scope>NUCLEOTIDE SEQUENCE [GENOMIC DNA]</scope>
</reference>
<reference key="2">
    <citation type="journal article" date="2005" name="J. Invertebr. Pathol.">
        <title>Characterization of three ascovirus isolates from cotton insects.</title>
        <authorList>
            <person name="Cheng X.W."/>
            <person name="Wang L."/>
            <person name="Carner G.R."/>
            <person name="Arif B.M."/>
        </authorList>
    </citation>
    <scope>NUCLEOTIDE SEQUENCE [GENOMIC DNA]</scope>
</reference>
<reference key="3">
    <citation type="journal article" date="2006" name="J. Virol.">
        <title>Genomic sequence of Spodoptera frugiperda Ascovirus 1a, an enveloped, double-stranded DNA insect virus that manipulates apoptosis for viral reproduction.</title>
        <authorList>
            <person name="Bideshi D.K."/>
            <person name="Demattei M.V."/>
            <person name="Rouleux-Bonnin F."/>
            <person name="Stasiak K."/>
            <person name="Tan Y."/>
            <person name="Bigot S."/>
            <person name="Bigot Y."/>
            <person name="Federici B.A."/>
        </authorList>
    </citation>
    <scope>NUCLEOTIDE SEQUENCE [LARGE SCALE GENOMIC DNA]</scope>
</reference>
<gene>
    <name type="primary">MCP</name>
    <name type="ORF">ORF041</name>
</gene>
<dbReference type="EMBL" id="AJ312690">
    <property type="protein sequence ID" value="CAC84465.1"/>
    <property type="molecule type" value="Genomic_DNA"/>
</dbReference>
<dbReference type="EMBL" id="AF419097">
    <property type="protein sequence ID" value="AAL16645.1"/>
    <property type="status" value="ALT_SEQ"/>
    <property type="molecule type" value="Genomic_DNA"/>
</dbReference>
<dbReference type="EMBL" id="AM398843">
    <property type="protein sequence ID" value="CAL44641.1"/>
    <property type="molecule type" value="Genomic_DNA"/>
</dbReference>
<dbReference type="RefSeq" id="YP_762396.1">
    <property type="nucleotide sequence ID" value="NC_008361.1"/>
</dbReference>
<dbReference type="SMR" id="Q8JJY5"/>
<dbReference type="GeneID" id="4306162"/>
<dbReference type="KEGG" id="vg:4306162"/>
<dbReference type="OrthoDB" id="5386at10239"/>
<dbReference type="Proteomes" id="UP000008030">
    <property type="component" value="Genome"/>
</dbReference>
<dbReference type="GO" id="GO:0019028">
    <property type="term" value="C:viral capsid"/>
    <property type="evidence" value="ECO:0007669"/>
    <property type="project" value="UniProtKB-KW"/>
</dbReference>
<dbReference type="GO" id="GO:0005198">
    <property type="term" value="F:structural molecule activity"/>
    <property type="evidence" value="ECO:0007669"/>
    <property type="project" value="InterPro"/>
</dbReference>
<dbReference type="Gene3D" id="2.70.9.10">
    <property type="entry name" value="Adenovirus Type 2 Hexon, domain 4"/>
    <property type="match status" value="1"/>
</dbReference>
<dbReference type="Gene3D" id="2.70.9.20">
    <property type="entry name" value="Major capsid protein Vp54"/>
    <property type="match status" value="1"/>
</dbReference>
<dbReference type="InterPro" id="IPR031654">
    <property type="entry name" value="Capsid_N"/>
</dbReference>
<dbReference type="InterPro" id="IPR007542">
    <property type="entry name" value="MCP_C"/>
</dbReference>
<dbReference type="InterPro" id="IPR038519">
    <property type="entry name" value="MCP_C_sf"/>
</dbReference>
<dbReference type="InterPro" id="IPR016112">
    <property type="entry name" value="VP_dsDNA_II"/>
</dbReference>
<dbReference type="Pfam" id="PF16903">
    <property type="entry name" value="Capsid_N"/>
    <property type="match status" value="1"/>
</dbReference>
<dbReference type="Pfam" id="PF04451">
    <property type="entry name" value="Capsid_NCLDV"/>
    <property type="match status" value="1"/>
</dbReference>
<dbReference type="SUPFAM" id="SSF49749">
    <property type="entry name" value="Group II dsDNA viruses VP"/>
    <property type="match status" value="2"/>
</dbReference>
<accession>Q8JJY5</accession>
<accession>Q0E560</accession>
<accession>Q917M0</accession>
<organism>
    <name type="scientific">Spodoptera frugiperda ascovirus 1a</name>
    <name type="common">SfAV-1a</name>
    <dbReference type="NCBI Taxonomy" id="113370"/>
    <lineage>
        <taxon>Viruses</taxon>
        <taxon>Varidnaviria</taxon>
        <taxon>Bamfordvirae</taxon>
        <taxon>Nucleocytoviricota</taxon>
        <taxon>Megaviricetes</taxon>
        <taxon>Pimascovirales</taxon>
        <taxon>Ascoviridae</taxon>
        <taxon>Ascovirus</taxon>
        <taxon>Ascovirus sfav1a</taxon>
    </lineage>
</organism>
<organismHost>
    <name type="scientific">Spodoptera frugiperda</name>
    <name type="common">Fall armyworm</name>
    <dbReference type="NCBI Taxonomy" id="7108"/>
</organismHost>
<feature type="chain" id="PRO_0000330591" description="Major capsid protein">
    <location>
        <begin position="1"/>
        <end position="461"/>
    </location>
</feature>
<feature type="region of interest" description="Disordered" evidence="2">
    <location>
        <begin position="1"/>
        <end position="22"/>
    </location>
</feature>
<feature type="compositionally biased region" description="Polar residues" evidence="2">
    <location>
        <begin position="1"/>
        <end position="18"/>
    </location>
</feature>
<feature type="sequence conflict" description="In Ref. 2; AAL16645." evidence="3" ref="2">
    <original>L</original>
    <variation>V</variation>
    <location>
        <position position="112"/>
    </location>
</feature>
<feature type="sequence conflict" description="In Ref. 2; AAL16645." evidence="3" ref="2">
    <location>
        <begin position="157"/>
        <end position="162"/>
    </location>
</feature>
<keyword id="KW-0167">Capsid protein</keyword>
<keyword id="KW-1185">Reference proteome</keyword>
<keyword id="KW-0946">Virion</keyword>